<accession>P01700</accession>
<accession>A0A075B6I8</accession>
<accession>P04208</accession>
<reference key="1">
    <citation type="journal article" date="1999" name="Nature">
        <title>The DNA sequence of human chromosome 22.</title>
        <authorList>
            <person name="Dunham I."/>
            <person name="Hunt A.R."/>
            <person name="Collins J.E."/>
            <person name="Bruskiewich R."/>
            <person name="Beare D.M."/>
            <person name="Clamp M."/>
            <person name="Smink L.J."/>
            <person name="Ainscough R."/>
            <person name="Almeida J.P."/>
            <person name="Babbage A.K."/>
            <person name="Bagguley C."/>
            <person name="Bailey J."/>
            <person name="Barlow K.F."/>
            <person name="Bates K.N."/>
            <person name="Beasley O.P."/>
            <person name="Bird C.P."/>
            <person name="Blakey S.E."/>
            <person name="Bridgeman A.M."/>
            <person name="Buck D."/>
            <person name="Burgess J."/>
            <person name="Burrill W.D."/>
            <person name="Burton J."/>
            <person name="Carder C."/>
            <person name="Carter N.P."/>
            <person name="Chen Y."/>
            <person name="Clark G."/>
            <person name="Clegg S.M."/>
            <person name="Cobley V.E."/>
            <person name="Cole C.G."/>
            <person name="Collier R.E."/>
            <person name="Connor R."/>
            <person name="Conroy D."/>
            <person name="Corby N.R."/>
            <person name="Coville G.J."/>
            <person name="Cox A.V."/>
            <person name="Davis J."/>
            <person name="Dawson E."/>
            <person name="Dhami P.D."/>
            <person name="Dockree C."/>
            <person name="Dodsworth S.J."/>
            <person name="Durbin R.M."/>
            <person name="Ellington A.G."/>
            <person name="Evans K.L."/>
            <person name="Fey J.M."/>
            <person name="Fleming K."/>
            <person name="French L."/>
            <person name="Garner A.A."/>
            <person name="Gilbert J.G.R."/>
            <person name="Goward M.E."/>
            <person name="Grafham D.V."/>
            <person name="Griffiths M.N.D."/>
            <person name="Hall C."/>
            <person name="Hall R.E."/>
            <person name="Hall-Tamlyn G."/>
            <person name="Heathcott R.W."/>
            <person name="Ho S."/>
            <person name="Holmes S."/>
            <person name="Hunt S.E."/>
            <person name="Jones M.C."/>
            <person name="Kershaw J."/>
            <person name="Kimberley A.M."/>
            <person name="King A."/>
            <person name="Laird G.K."/>
            <person name="Langford C.F."/>
            <person name="Leversha M.A."/>
            <person name="Lloyd C."/>
            <person name="Lloyd D.M."/>
            <person name="Martyn I.D."/>
            <person name="Mashreghi-Mohammadi M."/>
            <person name="Matthews L.H."/>
            <person name="Mccann O.T."/>
            <person name="Mcclay J."/>
            <person name="Mclaren S."/>
            <person name="McMurray A.A."/>
            <person name="Milne S.A."/>
            <person name="Mortimore B.J."/>
            <person name="Odell C.N."/>
            <person name="Pavitt R."/>
            <person name="Pearce A.V."/>
            <person name="Pearson D."/>
            <person name="Phillimore B.J.C.T."/>
            <person name="Phillips S.H."/>
            <person name="Plumb R.W."/>
            <person name="Ramsay H."/>
            <person name="Ramsey Y."/>
            <person name="Rogers L."/>
            <person name="Ross M.T."/>
            <person name="Scott C.E."/>
            <person name="Sehra H.K."/>
            <person name="Skuce C.D."/>
            <person name="Smalley S."/>
            <person name="Smith M.L."/>
            <person name="Soderlund C."/>
            <person name="Spragon L."/>
            <person name="Steward C.A."/>
            <person name="Sulston J.E."/>
            <person name="Swann R.M."/>
            <person name="Vaudin M."/>
            <person name="Wall M."/>
            <person name="Wallis J.M."/>
            <person name="Whiteley M.N."/>
            <person name="Willey D.L."/>
            <person name="Williams L."/>
            <person name="Williams S.A."/>
            <person name="Williamson H."/>
            <person name="Wilmer T.E."/>
            <person name="Wilming L."/>
            <person name="Wright C.L."/>
            <person name="Hubbard T."/>
            <person name="Bentley D.R."/>
            <person name="Beck S."/>
            <person name="Rogers J."/>
            <person name="Shimizu N."/>
            <person name="Minoshima S."/>
            <person name="Kawasaki K."/>
            <person name="Sasaki T."/>
            <person name="Asakawa S."/>
            <person name="Kudoh J."/>
            <person name="Shintani A."/>
            <person name="Shibuya K."/>
            <person name="Yoshizaki Y."/>
            <person name="Aoki N."/>
            <person name="Mitsuyama S."/>
            <person name="Roe B.A."/>
            <person name="Chen F."/>
            <person name="Chu L."/>
            <person name="Crabtree J."/>
            <person name="Deschamps S."/>
            <person name="Do A."/>
            <person name="Do T."/>
            <person name="Dorman A."/>
            <person name="Fang F."/>
            <person name="Fu Y."/>
            <person name="Hu P."/>
            <person name="Hua A."/>
            <person name="Kenton S."/>
            <person name="Lai H."/>
            <person name="Lao H.I."/>
            <person name="Lewis J."/>
            <person name="Lewis S."/>
            <person name="Lin S.-P."/>
            <person name="Loh P."/>
            <person name="Malaj E."/>
            <person name="Nguyen T."/>
            <person name="Pan H."/>
            <person name="Phan S."/>
            <person name="Qi S."/>
            <person name="Qian Y."/>
            <person name="Ray L."/>
            <person name="Ren Q."/>
            <person name="Shaull S."/>
            <person name="Sloan D."/>
            <person name="Song L."/>
            <person name="Wang Q."/>
            <person name="Wang Y."/>
            <person name="Wang Z."/>
            <person name="White J."/>
            <person name="Willingham D."/>
            <person name="Wu H."/>
            <person name="Yao Z."/>
            <person name="Zhan M."/>
            <person name="Zhang G."/>
            <person name="Chissoe S."/>
            <person name="Murray J."/>
            <person name="Miller N."/>
            <person name="Minx P."/>
            <person name="Fulton R."/>
            <person name="Johnson D."/>
            <person name="Bemis G."/>
            <person name="Bentley D."/>
            <person name="Bradshaw H."/>
            <person name="Bourne S."/>
            <person name="Cordes M."/>
            <person name="Du Z."/>
            <person name="Fulton L."/>
            <person name="Goela D."/>
            <person name="Graves T."/>
            <person name="Hawkins J."/>
            <person name="Hinds K."/>
            <person name="Kemp K."/>
            <person name="Latreille P."/>
            <person name="Layman D."/>
            <person name="Ozersky P."/>
            <person name="Rohlfing T."/>
            <person name="Scheet P."/>
            <person name="Walker C."/>
            <person name="Wamsley A."/>
            <person name="Wohldmann P."/>
            <person name="Pepin K."/>
            <person name="Nelson J."/>
            <person name="Korf I."/>
            <person name="Bedell J.A."/>
            <person name="Hillier L.W."/>
            <person name="Mardis E."/>
            <person name="Waterston R."/>
            <person name="Wilson R."/>
            <person name="Emanuel B.S."/>
            <person name="Shaikh T."/>
            <person name="Kurahashi H."/>
            <person name="Saitta S."/>
            <person name="Budarf M.L."/>
            <person name="McDermid H.E."/>
            <person name="Johnson A."/>
            <person name="Wong A.C.C."/>
            <person name="Morrow B.E."/>
            <person name="Edelmann L."/>
            <person name="Kim U.J."/>
            <person name="Shizuya H."/>
            <person name="Simon M.I."/>
            <person name="Dumanski J.P."/>
            <person name="Peyrard M."/>
            <person name="Kedra D."/>
            <person name="Seroussi E."/>
            <person name="Fransson I."/>
            <person name="Tapia I."/>
            <person name="Bruder C.E."/>
            <person name="O'Brien K.P."/>
            <person name="Wilkinson P."/>
            <person name="Bodenteich A."/>
            <person name="Hartman K."/>
            <person name="Hu X."/>
            <person name="Khan A.S."/>
            <person name="Lane L."/>
            <person name="Tilahun Y."/>
            <person name="Wright H."/>
        </authorList>
    </citation>
    <scope>NUCLEOTIDE SEQUENCE [LARGE SCALE GENOMIC DNA] (IMGT ALLELE IGLV1-47*02)</scope>
</reference>
<reference key="2">
    <citation type="journal article" date="1970" name="J. Biol. Chem.">
        <title>Amino acid sequence of human lambda chains. II. Chymotryptic peptides and sequence of protein Ha.</title>
        <authorList>
            <person name="Shinoda T."/>
            <person name="Titani K."/>
            <person name="Putnam F.W."/>
        </authorList>
    </citation>
    <scope>PROTEIN SEQUENCE OF 20-117</scope>
    <scope>PYROGLUTAMATE FORMATION AT GLN-20</scope>
</reference>
<reference key="3">
    <citation type="journal article" date="1983" name="Proc. Natl. Acad. Sci. U.S.A.">
        <title>Complete covalent structure of a human immunoglobulin D: sequence of the lambda light chain.</title>
        <authorList>
            <person name="Takahashi Y."/>
            <person name="Takahashi N."/>
            <person name="Tetaert D."/>
            <person name="Putnam F.W."/>
        </authorList>
    </citation>
    <scope>PROTEIN SEQUENCE OF 20-117</scope>
</reference>
<reference key="4">
    <citation type="journal article" date="2001" name="Exp. Clin. Immunogenet.">
        <title>Nomenclature of the human immunoglobulin lambda (IGL) genes.</title>
        <authorList>
            <person name="Lefranc M.P."/>
        </authorList>
    </citation>
    <scope>NOMENCLATURE</scope>
</reference>
<reference key="5">
    <citation type="book" date="2001" name="The Immunoglobulin FactsBook.">
        <title>The Immunoglobulin FactsBook.</title>
        <editorList>
            <person name="Lefranc M.P."/>
            <person name="Lefranc G."/>
        </editorList>
        <authorList>
            <person name="Lefranc M.P."/>
            <person name="Lefranc G."/>
        </authorList>
    </citation>
    <scope>NOMENCLATURE</scope>
</reference>
<reference key="6">
    <citation type="journal article" date="2007" name="Annu. Rev. Genet.">
        <title>Immunoglobulin somatic hypermutation.</title>
        <authorList>
            <person name="Teng G."/>
            <person name="Papavasiliou F.N."/>
        </authorList>
    </citation>
    <scope>REVIEW ON SOMATIC HYPERMUTATION</scope>
</reference>
<reference key="7">
    <citation type="journal article" date="2010" name="J. Allergy Clin. Immunol.">
        <title>Structure and function of immunoglobulins.</title>
        <authorList>
            <person name="Schroeder H.W. Jr."/>
            <person name="Cavacini L."/>
        </authorList>
    </citation>
    <scope>REVIEW ON IMMUNOGLOBULINS</scope>
</reference>
<reference key="8">
    <citation type="journal article" date="2012" name="Nat. Rev. Immunol.">
        <title>Molecular programming of B cell memory.</title>
        <authorList>
            <person name="McHeyzer-Williams M."/>
            <person name="Okitsu S."/>
            <person name="Wang N."/>
            <person name="McHeyzer-Williams L."/>
        </authorList>
    </citation>
    <scope>REVIEW ON FUNCTION</scope>
</reference>
<reference key="9">
    <citation type="journal article" date="2014" name="Front. Immunol.">
        <title>Immunoglobulin and T Cell Receptor Genes: IMGT((R)) and the Birth and Rise of Immunoinformatics.</title>
        <authorList>
            <person name="Lefranc M.P."/>
        </authorList>
    </citation>
    <scope>NOMENCLATURE</scope>
</reference>
<feature type="signal peptide" evidence="3 4">
    <location>
        <begin position="1"/>
        <end position="19"/>
    </location>
</feature>
<feature type="chain" id="PRO_0000059823" description="Immunoglobulin lambda variable 1-47" evidence="3 4">
    <location>
        <begin position="20"/>
        <end position="117"/>
    </location>
</feature>
<feature type="domain" description="Ig-like" evidence="2">
    <location>
        <begin position="20"/>
        <end position="117" status="greater than"/>
    </location>
</feature>
<feature type="region of interest" description="Framework-1" evidence="1">
    <location>
        <begin position="20"/>
        <end position="44"/>
    </location>
</feature>
<feature type="region of interest" description="Complementarity-determining-1" evidence="1">
    <location>
        <begin position="45"/>
        <end position="52"/>
    </location>
</feature>
<feature type="region of interest" description="Framework-2" evidence="1">
    <location>
        <begin position="53"/>
        <end position="69"/>
    </location>
</feature>
<feature type="region of interest" description="Complementarity-determining-2" evidence="1">
    <location>
        <begin position="70"/>
        <end position="72"/>
    </location>
</feature>
<feature type="region of interest" description="Framework-3" evidence="1">
    <location>
        <begin position="73"/>
        <end position="108"/>
    </location>
</feature>
<feature type="region of interest" description="Complementarity-determining-3" evidence="1">
    <location>
        <begin position="109"/>
        <end position="117" status="greater than"/>
    </location>
</feature>
<feature type="modified residue" description="Pyrrolidone carboxylic acid" evidence="3">
    <location>
        <position position="20"/>
    </location>
</feature>
<feature type="disulfide bond" evidence="2">
    <location>
        <begin position="41"/>
        <end position="108"/>
    </location>
</feature>
<feature type="sequence conflict" description="In Ref. 2; AA sequence." evidence="11" ref="2">
    <original>A</original>
    <variation>V</variation>
    <location>
        <position position="29"/>
    </location>
</feature>
<feature type="sequence conflict" description="In Ref. 3; AA sequence." evidence="11" ref="3">
    <original>S</original>
    <variation>F</variation>
    <location>
        <position position="42"/>
    </location>
</feature>
<feature type="sequence conflict" description="In Ref. 2; AA sequence." evidence="11" ref="2">
    <original>S</original>
    <variation>G</variation>
    <location>
        <position position="44"/>
    </location>
</feature>
<feature type="sequence conflict" description="In Ref. 2; AA sequence." evidence="11" ref="2">
    <original>IGS</original>
    <variation>GTGN</variation>
    <location>
        <begin position="48"/>
        <end position="50"/>
    </location>
</feature>
<feature type="sequence conflict" description="In Ref. 3; AA sequence." evidence="11" ref="3">
    <original>SN</original>
    <variation>RY</variation>
    <location>
        <begin position="50"/>
        <end position="51"/>
    </location>
</feature>
<feature type="sequence conflict" description="In Ref. 3; AA sequence." evidence="11" ref="3">
    <original>A</original>
    <variation>T</variation>
    <location>
        <position position="63"/>
    </location>
</feature>
<feature type="sequence conflict" description="In Ref. 2; AA sequence." evidence="11" ref="2">
    <original>SNNQ</original>
    <variation>RDDK</variation>
    <location>
        <begin position="70"/>
        <end position="73"/>
    </location>
</feature>
<feature type="sequence conflict" description="In Ref. 3; AA sequence." evidence="11" ref="3">
    <original>SN</original>
    <variation>KD</variation>
    <location>
        <begin position="70"/>
        <end position="71"/>
    </location>
</feature>
<feature type="sequence conflict" description="In Ref. 2; AA sequence." evidence="11" ref="2">
    <original>DYY</original>
    <variation>HYH</variation>
    <location>
        <begin position="105"/>
        <end position="107"/>
    </location>
</feature>
<feature type="sequence conflict" description="In Ref. 2; AA sequence." evidence="11" ref="2">
    <original>DS</original>
    <variation>YR</variation>
    <location>
        <begin position="113"/>
        <end position="114"/>
    </location>
</feature>
<feature type="sequence conflict" description="In Ref. 3; AA sequence." evidence="11" ref="3">
    <original>SG</original>
    <variation>WV</variation>
    <location>
        <begin position="116"/>
        <end position="117"/>
    </location>
</feature>
<feature type="sequence conflict" description="In Ref. 2; AA sequence." evidence="11" ref="2">
    <original>G</original>
    <variation>A</variation>
    <location>
        <position position="117"/>
    </location>
</feature>
<feature type="non-terminal residue">
    <location>
        <position position="117"/>
    </location>
</feature>
<dbReference type="EMBL" id="AC245060">
    <property type="status" value="NOT_ANNOTATED_CDS"/>
    <property type="molecule type" value="Genomic_DNA"/>
</dbReference>
<dbReference type="PIR" id="A01963">
    <property type="entry name" value="L1HUHA"/>
</dbReference>
<dbReference type="PIR" id="A01967">
    <property type="entry name" value="L1HUWA"/>
</dbReference>
<dbReference type="PDB" id="1ZVO">
    <property type="method" value="X-ray"/>
    <property type="chains" value="A/B=20-115"/>
</dbReference>
<dbReference type="PDBsum" id="1ZVO"/>
<dbReference type="EMDB" id="EMD-21647"/>
<dbReference type="EMDB" id="EMD-32443"/>
<dbReference type="EMDB" id="EMD-32449"/>
<dbReference type="EMDB" id="EMD-32788"/>
<dbReference type="EMDB" id="EMD-32789"/>
<dbReference type="EMDB" id="EMD-34124"/>
<dbReference type="EMDB" id="EMD-34125"/>
<dbReference type="EMDB" id="EMD-34134"/>
<dbReference type="EMDB" id="EMD-34261"/>
<dbReference type="EMDB" id="EMD-39196"/>
<dbReference type="SMR" id="P01700"/>
<dbReference type="FunCoup" id="P01700">
    <property type="interactions" value="547"/>
</dbReference>
<dbReference type="IntAct" id="P01700">
    <property type="interactions" value="4"/>
</dbReference>
<dbReference type="MINT" id="P01700"/>
<dbReference type="IMGT_GENE-DB" id="IGLV1-47"/>
<dbReference type="GlyGen" id="P01700">
    <property type="glycosylation" value="1 site"/>
</dbReference>
<dbReference type="BioMuta" id="IGLV1-47"/>
<dbReference type="DMDM" id="126547"/>
<dbReference type="jPOST" id="P01700"/>
<dbReference type="MassIVE" id="P01700"/>
<dbReference type="Ensembl" id="ENST00000390294.2">
    <property type="protein sequence ID" value="ENSP00000374829.2"/>
    <property type="gene ID" value="ENSG00000211648.2"/>
</dbReference>
<dbReference type="AGR" id="HGNC:5880"/>
<dbReference type="GeneCards" id="IGLV1-47"/>
<dbReference type="HGNC" id="HGNC:5880">
    <property type="gene designation" value="IGLV1-47"/>
</dbReference>
<dbReference type="HPA" id="ENSG00000211648">
    <property type="expression patterns" value="Tissue enhanced (intestine, lymphoid tissue)"/>
</dbReference>
<dbReference type="neXtProt" id="NX_P01700"/>
<dbReference type="OpenTargets" id="ENSG00000211648"/>
<dbReference type="VEuPathDB" id="HostDB:ENSG00000211648"/>
<dbReference type="GeneTree" id="ENSGT00940000154293"/>
<dbReference type="InParanoid" id="P01700"/>
<dbReference type="OMA" id="SNSVYWY"/>
<dbReference type="PAN-GO" id="P01700">
    <property type="GO annotations" value="3 GO annotations based on evolutionary models"/>
</dbReference>
<dbReference type="PhylomeDB" id="P01700"/>
<dbReference type="PathwayCommons" id="P01700"/>
<dbReference type="Reactome" id="R-HSA-166663">
    <property type="pathway name" value="Initial triggering of complement"/>
</dbReference>
<dbReference type="Reactome" id="R-HSA-173623">
    <property type="pathway name" value="Classical antibody-mediated complement activation"/>
</dbReference>
<dbReference type="Reactome" id="R-HSA-198933">
    <property type="pathway name" value="Immunoregulatory interactions between a Lymphoid and a non-Lymphoid cell"/>
</dbReference>
<dbReference type="Reactome" id="R-HSA-202733">
    <property type="pathway name" value="Cell surface interactions at the vascular wall"/>
</dbReference>
<dbReference type="Reactome" id="R-HSA-2029481">
    <property type="pathway name" value="FCGR activation"/>
</dbReference>
<dbReference type="Reactome" id="R-HSA-2029482">
    <property type="pathway name" value="Regulation of actin dynamics for phagocytic cup formation"/>
</dbReference>
<dbReference type="Reactome" id="R-HSA-2029485">
    <property type="pathway name" value="Role of phospholipids in phagocytosis"/>
</dbReference>
<dbReference type="Reactome" id="R-HSA-2168880">
    <property type="pathway name" value="Scavenging of heme from plasma"/>
</dbReference>
<dbReference type="Reactome" id="R-HSA-2454202">
    <property type="pathway name" value="Fc epsilon receptor (FCERI) signaling"/>
</dbReference>
<dbReference type="Reactome" id="R-HSA-2730905">
    <property type="pathway name" value="Role of LAT2/NTAL/LAB on calcium mobilization"/>
</dbReference>
<dbReference type="Reactome" id="R-HSA-2871796">
    <property type="pathway name" value="FCERI mediated MAPK activation"/>
</dbReference>
<dbReference type="Reactome" id="R-HSA-2871809">
    <property type="pathway name" value="FCERI mediated Ca+2 mobilization"/>
</dbReference>
<dbReference type="Reactome" id="R-HSA-2871837">
    <property type="pathway name" value="FCERI mediated NF-kB activation"/>
</dbReference>
<dbReference type="Reactome" id="R-HSA-5690714">
    <property type="pathway name" value="CD22 mediated BCR regulation"/>
</dbReference>
<dbReference type="Reactome" id="R-HSA-9664323">
    <property type="pathway name" value="FCGR3A-mediated IL10 synthesis"/>
</dbReference>
<dbReference type="Reactome" id="R-HSA-9664422">
    <property type="pathway name" value="FCGR3A-mediated phagocytosis"/>
</dbReference>
<dbReference type="Reactome" id="R-HSA-9679191">
    <property type="pathway name" value="Potential therapeutics for SARS"/>
</dbReference>
<dbReference type="Reactome" id="R-HSA-977606">
    <property type="pathway name" value="Regulation of Complement cascade"/>
</dbReference>
<dbReference type="Reactome" id="R-HSA-983695">
    <property type="pathway name" value="Antigen activates B Cell Receptor (BCR) leading to generation of second messengers"/>
</dbReference>
<dbReference type="SignaLink" id="P01700"/>
<dbReference type="ChiTaRS" id="IGLV1-47">
    <property type="organism name" value="human"/>
</dbReference>
<dbReference type="Pharos" id="P01700">
    <property type="development level" value="Tdark"/>
</dbReference>
<dbReference type="PRO" id="PR:P01700"/>
<dbReference type="Proteomes" id="UP000005640">
    <property type="component" value="Chromosome 22"/>
</dbReference>
<dbReference type="RNAct" id="P01700">
    <property type="molecule type" value="protein"/>
</dbReference>
<dbReference type="Bgee" id="ENSG00000211648">
    <property type="expression patterns" value="Expressed in rectum and 133 other cell types or tissues"/>
</dbReference>
<dbReference type="GO" id="GO:0072562">
    <property type="term" value="C:blood microparticle"/>
    <property type="evidence" value="ECO:0007005"/>
    <property type="project" value="UniProtKB"/>
</dbReference>
<dbReference type="GO" id="GO:0005576">
    <property type="term" value="C:extracellular region"/>
    <property type="evidence" value="ECO:0000304"/>
    <property type="project" value="Reactome"/>
</dbReference>
<dbReference type="GO" id="GO:0019814">
    <property type="term" value="C:immunoglobulin complex"/>
    <property type="evidence" value="ECO:0000318"/>
    <property type="project" value="GO_Central"/>
</dbReference>
<dbReference type="GO" id="GO:0005886">
    <property type="term" value="C:plasma membrane"/>
    <property type="evidence" value="ECO:0000304"/>
    <property type="project" value="Reactome"/>
</dbReference>
<dbReference type="GO" id="GO:0003823">
    <property type="term" value="F:antigen binding"/>
    <property type="evidence" value="ECO:0000303"/>
    <property type="project" value="UniProtKB"/>
</dbReference>
<dbReference type="GO" id="GO:0002250">
    <property type="term" value="P:adaptive immune response"/>
    <property type="evidence" value="ECO:0007669"/>
    <property type="project" value="UniProtKB-KW"/>
</dbReference>
<dbReference type="GO" id="GO:0006955">
    <property type="term" value="P:immune response"/>
    <property type="evidence" value="ECO:0000318"/>
    <property type="project" value="GO_Central"/>
</dbReference>
<dbReference type="FunFam" id="2.60.40.10:FF:000442">
    <property type="entry name" value="Immunoglobulin lambda variable 2-8"/>
    <property type="match status" value="1"/>
</dbReference>
<dbReference type="Gene3D" id="2.60.40.10">
    <property type="entry name" value="Immunoglobulins"/>
    <property type="match status" value="1"/>
</dbReference>
<dbReference type="InterPro" id="IPR007110">
    <property type="entry name" value="Ig-like_dom"/>
</dbReference>
<dbReference type="InterPro" id="IPR036179">
    <property type="entry name" value="Ig-like_dom_sf"/>
</dbReference>
<dbReference type="InterPro" id="IPR013783">
    <property type="entry name" value="Ig-like_fold"/>
</dbReference>
<dbReference type="InterPro" id="IPR003599">
    <property type="entry name" value="Ig_sub"/>
</dbReference>
<dbReference type="InterPro" id="IPR013106">
    <property type="entry name" value="Ig_V-set"/>
</dbReference>
<dbReference type="InterPro" id="IPR050150">
    <property type="entry name" value="IgV_Light_Chain"/>
</dbReference>
<dbReference type="PANTHER" id="PTHR23267">
    <property type="entry name" value="IMMUNOGLOBULIN LIGHT CHAIN"/>
    <property type="match status" value="1"/>
</dbReference>
<dbReference type="Pfam" id="PF07686">
    <property type="entry name" value="V-set"/>
    <property type="match status" value="1"/>
</dbReference>
<dbReference type="SMART" id="SM00409">
    <property type="entry name" value="IG"/>
    <property type="match status" value="1"/>
</dbReference>
<dbReference type="SMART" id="SM00406">
    <property type="entry name" value="IGv"/>
    <property type="match status" value="1"/>
</dbReference>
<dbReference type="SUPFAM" id="SSF48726">
    <property type="entry name" value="Immunoglobulin"/>
    <property type="match status" value="1"/>
</dbReference>
<dbReference type="PROSITE" id="PS50835">
    <property type="entry name" value="IG_LIKE"/>
    <property type="match status" value="1"/>
</dbReference>
<evidence type="ECO:0000250" key="1">
    <source>
        <dbReference type="UniProtKB" id="P01721"/>
    </source>
</evidence>
<evidence type="ECO:0000255" key="2">
    <source>
        <dbReference type="PROSITE-ProRule" id="PRU00114"/>
    </source>
</evidence>
<evidence type="ECO:0000269" key="3">
    <source>
    </source>
</evidence>
<evidence type="ECO:0000269" key="4">
    <source>
    </source>
</evidence>
<evidence type="ECO:0000303" key="5">
    <source>
    </source>
</evidence>
<evidence type="ECO:0000303" key="6">
    <source>
    </source>
</evidence>
<evidence type="ECO:0000303" key="7">
    <source>
    </source>
</evidence>
<evidence type="ECO:0000303" key="8">
    <source>
    </source>
</evidence>
<evidence type="ECO:0000303" key="9">
    <source>
    </source>
</evidence>
<evidence type="ECO:0000303" key="10">
    <source ref="5"/>
</evidence>
<evidence type="ECO:0000305" key="11"/>
<evidence type="ECO:0000305" key="12">
    <source>
    </source>
</evidence>
<evidence type="ECO:0000305" key="13">
    <source>
    </source>
</evidence>
<comment type="function">
    <text evidence="6 7 8 9">V region of the variable domain of immunoglobulin light chains that participates in the antigen recognition (PubMed:24600447). Immunoglobulins, also known as antibodies, are membrane-bound or secreted glycoproteins produced by B lymphocytes. In the recognition phase of humoral immunity, the membrane-bound immunoglobulins serve as receptors which, upon binding of a specific antigen, trigger the clonal expansion and differentiation of B lymphocytes into immunoglobulins-secreting plasma cells. Secreted immunoglobulins mediate the effector phase of humoral immunity, which results in the elimination of bound antigens (PubMed:20176268, PubMed:22158414). The antigen binding site is formed by the variable domain of one heavy chain, together with that of its associated light chain. Thus, each immunoglobulin has two antigen binding sites with remarkable affinity for a particular antigen. The variable domains are assembled by a process called V-(D)-J rearrangement and can then be subjected to somatic hypermutations which, after exposure to antigen and selection, allow affinity maturation for a particular antigen (PubMed:17576170, PubMed:20176268).</text>
</comment>
<comment type="subunit">
    <text evidence="7">Immunoglobulins are composed of two identical heavy chains and two identical light chains; disulfide-linked.</text>
</comment>
<comment type="subcellular location">
    <subcellularLocation>
        <location evidence="7 8">Secreted</location>
    </subcellularLocation>
    <subcellularLocation>
        <location evidence="7 8">Cell membrane</location>
    </subcellularLocation>
</comment>
<comment type="polymorphism">
    <text>There are several alleles. The sequence shown is that of IMGT allele IGLV1-47*02.</text>
</comment>
<comment type="caution">
    <text evidence="11">For an example of a full-length immunoglobulin lambda light chain see AC P0DOX8.</text>
</comment>
<sequence>MAGFPLLLTLLTHCAGSWAQSVLTQPPSASGTPGQRVTISCSGSSSNIGSNYVYWYQQLPGTAPKLLIYSNNQRPSGVPDRFSGSKSGTSASLAISGLRSEDEADYYCAAWDDSLSG</sequence>
<proteinExistence type="evidence at protein level"/>
<organism>
    <name type="scientific">Homo sapiens</name>
    <name type="common">Human</name>
    <dbReference type="NCBI Taxonomy" id="9606"/>
    <lineage>
        <taxon>Eukaryota</taxon>
        <taxon>Metazoa</taxon>
        <taxon>Chordata</taxon>
        <taxon>Craniata</taxon>
        <taxon>Vertebrata</taxon>
        <taxon>Euteleostomi</taxon>
        <taxon>Mammalia</taxon>
        <taxon>Eutheria</taxon>
        <taxon>Euarchontoglires</taxon>
        <taxon>Primates</taxon>
        <taxon>Haplorrhini</taxon>
        <taxon>Catarrhini</taxon>
        <taxon>Hominidae</taxon>
        <taxon>Homo</taxon>
    </lineage>
</organism>
<name>LV147_HUMAN</name>
<keyword id="KW-0002">3D-structure</keyword>
<keyword id="KW-1064">Adaptive immunity</keyword>
<keyword id="KW-1003">Cell membrane</keyword>
<keyword id="KW-0903">Direct protein sequencing</keyword>
<keyword id="KW-1015">Disulfide bond</keyword>
<keyword id="KW-0391">Immunity</keyword>
<keyword id="KW-1280">Immunoglobulin</keyword>
<keyword id="KW-0393">Immunoglobulin domain</keyword>
<keyword id="KW-0472">Membrane</keyword>
<keyword id="KW-1267">Proteomics identification</keyword>
<keyword id="KW-0873">Pyrrolidone carboxylic acid</keyword>
<keyword id="KW-1185">Reference proteome</keyword>
<keyword id="KW-0964">Secreted</keyword>
<keyword id="KW-0732">Signal</keyword>
<protein>
    <recommendedName>
        <fullName evidence="5 10">Immunoglobulin lambda variable 1-47</fullName>
    </recommendedName>
    <alternativeName>
        <fullName evidence="12">Ig lambda chain V-I region HA</fullName>
    </alternativeName>
    <alternativeName>
        <fullName evidence="13">Ig lambda chain V-I region WAH</fullName>
    </alternativeName>
</protein>
<gene>
    <name evidence="5 10" type="primary">IGLV1-47</name>
</gene>